<keyword id="KW-0520">NAD</keyword>
<keyword id="KW-0560">Oxidoreductase</keyword>
<keyword id="KW-1185">Reference proteome</keyword>
<proteinExistence type="inferred from homology"/>
<sequence>MHDKLLIEGKLIAGNGEALAVFNPATGEQIAAIPQADLHQIDAAVLAAESAFAHWGQTTPKTRATLLLKIADAIEENAEVFAKLESLNCGKPYHAVLNDEVPAVADVFRFFAGAARCLSGSAAGEYLEGHTSMIRRDPVGVVASIAPWNYPLMMASWKLAPALAAGNCVVLKPAEQTPLTTFYLAHLLADILPAGVVNIVFGRGADIGDALTGHEKVNMVSLTGSIATGAHILAHTAASVKRTHMELGGKAPVIVFDDADIDQVVDGIRSFGFYNAGQDCTAACRLYVQRAVYDEVVEALGKAVATLKIGDPRDETTELGPLITEPQLERVMGFVERAKALPHITVVTGGERVKGTGFYFQPTVLAGAKQDDEIVQKEVFGPVISITSFDDEAQVIGWANASNYGLASSVWTRDIGRAHRLAACLQYGCTWVNTHFMLVSEMPHGGQKLSGYGKDMSMYGLEDYTIVRHIMIRH</sequence>
<dbReference type="EC" id="1.2.1.19" evidence="1"/>
<dbReference type="EC" id="1.2.1.-" evidence="1"/>
<dbReference type="EMBL" id="BX950851">
    <property type="protein sequence ID" value="CAG74448.1"/>
    <property type="molecule type" value="Genomic_DNA"/>
</dbReference>
<dbReference type="RefSeq" id="WP_011093122.1">
    <property type="nucleotide sequence ID" value="NC_004547.2"/>
</dbReference>
<dbReference type="SMR" id="Q6D6Y7"/>
<dbReference type="STRING" id="218491.ECA1542"/>
<dbReference type="KEGG" id="eca:ECA1542"/>
<dbReference type="PATRIC" id="fig|218491.5.peg.1583"/>
<dbReference type="eggNOG" id="COG1012">
    <property type="taxonomic scope" value="Bacteria"/>
</dbReference>
<dbReference type="HOGENOM" id="CLU_005391_0_0_6"/>
<dbReference type="OrthoDB" id="9812625at2"/>
<dbReference type="UniPathway" id="UPA00188">
    <property type="reaction ID" value="UER00292"/>
</dbReference>
<dbReference type="Proteomes" id="UP000007966">
    <property type="component" value="Chromosome"/>
</dbReference>
<dbReference type="GO" id="GO:0019145">
    <property type="term" value="F:aminobutyraldehyde dehydrogenase (NAD+) activity"/>
    <property type="evidence" value="ECO:0007669"/>
    <property type="project" value="UniProtKB-UniRule"/>
</dbReference>
<dbReference type="GO" id="GO:0051287">
    <property type="term" value="F:NAD binding"/>
    <property type="evidence" value="ECO:0007669"/>
    <property type="project" value="UniProtKB-UniRule"/>
</dbReference>
<dbReference type="GO" id="GO:0019477">
    <property type="term" value="P:L-lysine catabolic process"/>
    <property type="evidence" value="ECO:0007669"/>
    <property type="project" value="UniProtKB-UniRule"/>
</dbReference>
<dbReference type="GO" id="GO:0009447">
    <property type="term" value="P:putrescine catabolic process"/>
    <property type="evidence" value="ECO:0007669"/>
    <property type="project" value="UniProtKB-UniRule"/>
</dbReference>
<dbReference type="CDD" id="cd07092">
    <property type="entry name" value="ALDH_ABALDH-YdcW"/>
    <property type="match status" value="1"/>
</dbReference>
<dbReference type="FunFam" id="3.40.605.10:FF:000001">
    <property type="entry name" value="Aldehyde dehydrogenase 1"/>
    <property type="match status" value="1"/>
</dbReference>
<dbReference type="FunFam" id="3.40.309.10:FF:000010">
    <property type="entry name" value="Gamma-aminobutyraldehyde dehydrogenase"/>
    <property type="match status" value="1"/>
</dbReference>
<dbReference type="Gene3D" id="3.40.605.10">
    <property type="entry name" value="Aldehyde Dehydrogenase, Chain A, domain 1"/>
    <property type="match status" value="1"/>
</dbReference>
<dbReference type="Gene3D" id="3.40.309.10">
    <property type="entry name" value="Aldehyde Dehydrogenase, Chain A, domain 2"/>
    <property type="match status" value="1"/>
</dbReference>
<dbReference type="HAMAP" id="MF_01275">
    <property type="entry name" value="Aldedh_Prr"/>
    <property type="match status" value="1"/>
</dbReference>
<dbReference type="InterPro" id="IPR016161">
    <property type="entry name" value="Ald_DH/histidinol_DH"/>
</dbReference>
<dbReference type="InterPro" id="IPR016163">
    <property type="entry name" value="Ald_DH_C"/>
</dbReference>
<dbReference type="InterPro" id="IPR029510">
    <property type="entry name" value="Ald_DH_CS_GLU"/>
</dbReference>
<dbReference type="InterPro" id="IPR016162">
    <property type="entry name" value="Ald_DH_N"/>
</dbReference>
<dbReference type="InterPro" id="IPR015590">
    <property type="entry name" value="Aldehyde_DH_dom"/>
</dbReference>
<dbReference type="InterPro" id="IPR015657">
    <property type="entry name" value="Aminobutyraldehyde_DH"/>
</dbReference>
<dbReference type="InterPro" id="IPR017749">
    <property type="entry name" value="PatD"/>
</dbReference>
<dbReference type="NCBIfam" id="TIGR03374">
    <property type="entry name" value="ABALDH"/>
    <property type="match status" value="1"/>
</dbReference>
<dbReference type="NCBIfam" id="NF010000">
    <property type="entry name" value="PRK13473.1"/>
    <property type="match status" value="1"/>
</dbReference>
<dbReference type="PANTHER" id="PTHR11699">
    <property type="entry name" value="ALDEHYDE DEHYDROGENASE-RELATED"/>
    <property type="match status" value="1"/>
</dbReference>
<dbReference type="Pfam" id="PF00171">
    <property type="entry name" value="Aldedh"/>
    <property type="match status" value="1"/>
</dbReference>
<dbReference type="SUPFAM" id="SSF53720">
    <property type="entry name" value="ALDH-like"/>
    <property type="match status" value="1"/>
</dbReference>
<dbReference type="PROSITE" id="PS00687">
    <property type="entry name" value="ALDEHYDE_DEHYDR_GLU"/>
    <property type="match status" value="1"/>
</dbReference>
<evidence type="ECO:0000255" key="1">
    <source>
        <dbReference type="HAMAP-Rule" id="MF_01275"/>
    </source>
</evidence>
<protein>
    <recommendedName>
        <fullName evidence="1">Gamma-aminobutyraldehyde dehydrogenase</fullName>
        <shortName evidence="1">ABALDH</shortName>
        <ecNumber evidence="1">1.2.1.19</ecNumber>
    </recommendedName>
    <alternativeName>
        <fullName evidence="1">1-pyrroline dehydrogenase</fullName>
    </alternativeName>
    <alternativeName>
        <fullName evidence="1">4-aminobutanal dehydrogenase</fullName>
    </alternativeName>
    <alternativeName>
        <fullName evidence="1">5-aminopentanal dehydrogenase</fullName>
        <ecNumber evidence="1">1.2.1.-</ecNumber>
    </alternativeName>
</protein>
<name>ABDH_PECAS</name>
<comment type="function">
    <text evidence="1">Catalyzes the oxidation 4-aminobutanal (gamma-aminobutyraldehyde) to 4-aminobutanoate (gamma-aminobutyrate or GABA). This is the second step in one of two pathways for putrescine degradation, where putrescine is converted into 4-aminobutanoate via 4-aminobutanal. Also functions as a 5-aminopentanal dehydrogenase in a a L-lysine degradation pathway to succinate that proceeds via cadaverine, glutarate and L-2-hydroxyglutarate.</text>
</comment>
<comment type="catalytic activity">
    <reaction evidence="1">
        <text>4-aminobutanal + NAD(+) + H2O = 4-aminobutanoate + NADH + 2 H(+)</text>
        <dbReference type="Rhea" id="RHEA:19105"/>
        <dbReference type="ChEBI" id="CHEBI:15377"/>
        <dbReference type="ChEBI" id="CHEBI:15378"/>
        <dbReference type="ChEBI" id="CHEBI:57540"/>
        <dbReference type="ChEBI" id="CHEBI:57945"/>
        <dbReference type="ChEBI" id="CHEBI:58264"/>
        <dbReference type="ChEBI" id="CHEBI:59888"/>
        <dbReference type="EC" id="1.2.1.19"/>
    </reaction>
    <physiologicalReaction direction="left-to-right" evidence="1">
        <dbReference type="Rhea" id="RHEA:19106"/>
    </physiologicalReaction>
</comment>
<comment type="catalytic activity">
    <reaction evidence="1">
        <text>5-aminopentanal + NAD(+) + H2O = 5-aminopentanoate + NADH + 2 H(+)</text>
        <dbReference type="Rhea" id="RHEA:61632"/>
        <dbReference type="ChEBI" id="CHEBI:15377"/>
        <dbReference type="ChEBI" id="CHEBI:15378"/>
        <dbReference type="ChEBI" id="CHEBI:57540"/>
        <dbReference type="ChEBI" id="CHEBI:57945"/>
        <dbReference type="ChEBI" id="CHEBI:144896"/>
        <dbReference type="ChEBI" id="CHEBI:356010"/>
    </reaction>
    <physiologicalReaction direction="left-to-right" evidence="1">
        <dbReference type="Rhea" id="RHEA:61633"/>
    </physiologicalReaction>
</comment>
<comment type="pathway">
    <text evidence="1">Amine and polyamine degradation; putrescine degradation; 4-aminobutanoate from 4-aminobutanal: step 1/1.</text>
</comment>
<comment type="pathway">
    <text evidence="1">Amino-acid degradation.</text>
</comment>
<comment type="subunit">
    <text evidence="1">Homotetramer.</text>
</comment>
<comment type="miscellaneous">
    <text evidence="1">4-aminobutanal can spontaneously cyclize to 1-pyrroline, and 5-aminopentanal to 1-piperideine.</text>
</comment>
<comment type="similarity">
    <text evidence="1">Belongs to the aldehyde dehydrogenase family. Gamma-aminobutyraldehyde dehydrogenase subfamily.</text>
</comment>
<organism>
    <name type="scientific">Pectobacterium atrosepticum (strain SCRI 1043 / ATCC BAA-672)</name>
    <name type="common">Erwinia carotovora subsp. atroseptica</name>
    <dbReference type="NCBI Taxonomy" id="218491"/>
    <lineage>
        <taxon>Bacteria</taxon>
        <taxon>Pseudomonadati</taxon>
        <taxon>Pseudomonadota</taxon>
        <taxon>Gammaproteobacteria</taxon>
        <taxon>Enterobacterales</taxon>
        <taxon>Pectobacteriaceae</taxon>
        <taxon>Pectobacterium</taxon>
    </lineage>
</organism>
<gene>
    <name evidence="1" type="primary">patD</name>
    <name type="ordered locus">ECA1542</name>
</gene>
<reference key="1">
    <citation type="journal article" date="2004" name="Proc. Natl. Acad. Sci. U.S.A.">
        <title>Genome sequence of the enterobacterial phytopathogen Erwinia carotovora subsp. atroseptica and characterization of virulence factors.</title>
        <authorList>
            <person name="Bell K.S."/>
            <person name="Sebaihia M."/>
            <person name="Pritchard L."/>
            <person name="Holden M.T.G."/>
            <person name="Hyman L.J."/>
            <person name="Holeva M.C."/>
            <person name="Thomson N.R."/>
            <person name="Bentley S.D."/>
            <person name="Churcher L.J.C."/>
            <person name="Mungall K."/>
            <person name="Atkin R."/>
            <person name="Bason N."/>
            <person name="Brooks K."/>
            <person name="Chillingworth T."/>
            <person name="Clark K."/>
            <person name="Doggett J."/>
            <person name="Fraser A."/>
            <person name="Hance Z."/>
            <person name="Hauser H."/>
            <person name="Jagels K."/>
            <person name="Moule S."/>
            <person name="Norbertczak H."/>
            <person name="Ormond D."/>
            <person name="Price C."/>
            <person name="Quail M.A."/>
            <person name="Sanders M."/>
            <person name="Walker D."/>
            <person name="Whitehead S."/>
            <person name="Salmond G.P.C."/>
            <person name="Birch P.R.J."/>
            <person name="Parkhill J."/>
            <person name="Toth I.K."/>
        </authorList>
    </citation>
    <scope>NUCLEOTIDE SEQUENCE [LARGE SCALE GENOMIC DNA]</scope>
    <source>
        <strain>SCRI 1043 / ATCC BAA-672</strain>
    </source>
</reference>
<feature type="chain" id="PRO_0000269696" description="Gamma-aminobutyraldehyde dehydrogenase">
    <location>
        <begin position="1"/>
        <end position="474"/>
    </location>
</feature>
<feature type="active site" evidence="1">
    <location>
        <position position="246"/>
    </location>
</feature>
<feature type="active site" description="Nucleophile" evidence="1">
    <location>
        <position position="280"/>
    </location>
</feature>
<feature type="binding site" evidence="1">
    <location>
        <begin position="146"/>
        <end position="148"/>
    </location>
    <ligand>
        <name>NAD(+)</name>
        <dbReference type="ChEBI" id="CHEBI:57540"/>
    </ligand>
</feature>
<feature type="binding site" evidence="1">
    <location>
        <begin position="172"/>
        <end position="175"/>
    </location>
    <ligand>
        <name>NAD(+)</name>
        <dbReference type="ChEBI" id="CHEBI:57540"/>
    </ligand>
</feature>
<feature type="binding site" evidence="1">
    <location>
        <position position="209"/>
    </location>
    <ligand>
        <name>NAD(+)</name>
        <dbReference type="ChEBI" id="CHEBI:57540"/>
    </ligand>
</feature>
<feature type="binding site" evidence="1">
    <location>
        <begin position="225"/>
        <end position="228"/>
    </location>
    <ligand>
        <name>NAD(+)</name>
        <dbReference type="ChEBI" id="CHEBI:57540"/>
    </ligand>
</feature>
<feature type="binding site" evidence="1">
    <location>
        <position position="280"/>
    </location>
    <ligand>
        <name>NAD(+)</name>
        <dbReference type="ChEBI" id="CHEBI:57540"/>
    </ligand>
</feature>
<accession>Q6D6Y7</accession>